<protein>
    <recommendedName>
        <fullName>Spermatid nuclear transition protein 1</fullName>
        <shortName>STP-1</shortName>
        <shortName>TP-1</shortName>
    </recommendedName>
</protein>
<organism>
    <name type="scientific">Sus scrofa</name>
    <name type="common">Pig</name>
    <dbReference type="NCBI Taxonomy" id="9823"/>
    <lineage>
        <taxon>Eukaryota</taxon>
        <taxon>Metazoa</taxon>
        <taxon>Chordata</taxon>
        <taxon>Craniata</taxon>
        <taxon>Vertebrata</taxon>
        <taxon>Euteleostomi</taxon>
        <taxon>Mammalia</taxon>
        <taxon>Eutheria</taxon>
        <taxon>Laurasiatheria</taxon>
        <taxon>Artiodactyla</taxon>
        <taxon>Suina</taxon>
        <taxon>Suidae</taxon>
        <taxon>Sus</taxon>
    </lineage>
</organism>
<name>STP1_PIG</name>
<gene>
    <name type="primary">TNP1</name>
</gene>
<comment type="function">
    <text evidence="1">Plays a key role in the replacement of histones to protamine in the elongating spermatids of mammals. In condensing spermatids, loaded onto the nucleosomes, where it promotes the recruitment and processing of protamines, which are responsible for histone eviction.</text>
</comment>
<comment type="subcellular location">
    <subcellularLocation>
        <location evidence="1">Nucleus</location>
    </subcellularLocation>
    <subcellularLocation>
        <location evidence="1">Chromosome</location>
    </subcellularLocation>
    <text evidence="1">Loaded onto the nucleosomes of condensing spermatids.</text>
</comment>
<comment type="tissue specificity">
    <text>Testis.</text>
</comment>
<comment type="similarity">
    <text evidence="5">Belongs to the nuclear transition protein 1 family.</text>
</comment>
<evidence type="ECO:0000250" key="1">
    <source>
        <dbReference type="UniProtKB" id="P10856"/>
    </source>
</evidence>
<evidence type="ECO:0000250" key="2">
    <source>
        <dbReference type="UniProtKB" id="P22613"/>
    </source>
</evidence>
<evidence type="ECO:0000256" key="3">
    <source>
        <dbReference type="SAM" id="MobiDB-lite"/>
    </source>
</evidence>
<evidence type="ECO:0000269" key="4">
    <source>
    </source>
</evidence>
<evidence type="ECO:0000305" key="5"/>
<dbReference type="EMBL" id="X16170">
    <property type="protein sequence ID" value="CAA34292.1"/>
    <property type="molecule type" value="mRNA"/>
</dbReference>
<dbReference type="EMBL" id="M80679">
    <property type="status" value="NOT_ANNOTATED_CDS"/>
    <property type="molecule type" value="Genomic_DNA"/>
</dbReference>
<dbReference type="PIR" id="S21670">
    <property type="entry name" value="BGPG"/>
</dbReference>
<dbReference type="RefSeq" id="XP_003133695.1">
    <property type="nucleotide sequence ID" value="XM_003133647.4"/>
</dbReference>
<dbReference type="FunCoup" id="P17306">
    <property type="interactions" value="48"/>
</dbReference>
<dbReference type="STRING" id="9823.ENSSSCP00000017139"/>
<dbReference type="iPTMnet" id="P17306"/>
<dbReference type="PaxDb" id="9823-ENSSSCP00000017139"/>
<dbReference type="Ensembl" id="ENSSSCT00000017617.2">
    <property type="protein sequence ID" value="ENSSSCP00000017139.1"/>
    <property type="gene ID" value="ENSSSCG00000016179.2"/>
</dbReference>
<dbReference type="Ensembl" id="ENSSSCT00015106602.1">
    <property type="protein sequence ID" value="ENSSSCP00015044886.1"/>
    <property type="gene ID" value="ENSSSCG00015078707.1"/>
</dbReference>
<dbReference type="Ensembl" id="ENSSSCT00025065680.1">
    <property type="protein sequence ID" value="ENSSSCP00025028013.1"/>
    <property type="gene ID" value="ENSSSCG00025048283.1"/>
</dbReference>
<dbReference type="Ensembl" id="ENSSSCT00030032302.1">
    <property type="protein sequence ID" value="ENSSSCP00030014549.1"/>
    <property type="gene ID" value="ENSSSCG00030023253.1"/>
</dbReference>
<dbReference type="Ensembl" id="ENSSSCT00035033007.1">
    <property type="protein sequence ID" value="ENSSSCP00035013017.1"/>
    <property type="gene ID" value="ENSSSCG00035025089.1"/>
</dbReference>
<dbReference type="Ensembl" id="ENSSSCT00040047914.1">
    <property type="protein sequence ID" value="ENSSSCP00040020027.1"/>
    <property type="gene ID" value="ENSSSCG00040035687.1"/>
</dbReference>
<dbReference type="Ensembl" id="ENSSSCT00045011999.1">
    <property type="protein sequence ID" value="ENSSSCP00045008164.1"/>
    <property type="gene ID" value="ENSSSCG00045007240.1"/>
</dbReference>
<dbReference type="Ensembl" id="ENSSSCT00050098796.1">
    <property type="protein sequence ID" value="ENSSSCP00050042700.1"/>
    <property type="gene ID" value="ENSSSCG00050072369.1"/>
</dbReference>
<dbReference type="Ensembl" id="ENSSSCT00055035451.1">
    <property type="protein sequence ID" value="ENSSSCP00055028160.1"/>
    <property type="gene ID" value="ENSSSCG00055018109.1"/>
</dbReference>
<dbReference type="Ensembl" id="ENSSSCT00060102199.1">
    <property type="protein sequence ID" value="ENSSSCP00060044479.1"/>
    <property type="gene ID" value="ENSSSCG00060074696.1"/>
</dbReference>
<dbReference type="Ensembl" id="ENSSSCT00065084472.1">
    <property type="protein sequence ID" value="ENSSSCP00065036844.1"/>
    <property type="gene ID" value="ENSSSCG00065061637.1"/>
</dbReference>
<dbReference type="Ensembl" id="ENSSSCT00070035722.1">
    <property type="protein sequence ID" value="ENSSSCP00070029847.1"/>
    <property type="gene ID" value="ENSSSCG00070018112.1"/>
</dbReference>
<dbReference type="Ensembl" id="ENSSSCT00085024434">
    <property type="protein sequence ID" value="ENSSSCP00085016833"/>
    <property type="gene ID" value="ENSSSCG00085012977"/>
</dbReference>
<dbReference type="Ensembl" id="ENSSSCT00090049274">
    <property type="protein sequence ID" value="ENSSSCP00090030505"/>
    <property type="gene ID" value="ENSSSCG00090027903"/>
</dbReference>
<dbReference type="Ensembl" id="ENSSSCT00105062809">
    <property type="protein sequence ID" value="ENSSSCP00105044635"/>
    <property type="gene ID" value="ENSSSCG00105033024"/>
</dbReference>
<dbReference type="Ensembl" id="ENSSSCT00110007446">
    <property type="protein sequence ID" value="ENSSSCP00110005350"/>
    <property type="gene ID" value="ENSSSCG00110003805"/>
</dbReference>
<dbReference type="Ensembl" id="ENSSSCT00115001049">
    <property type="protein sequence ID" value="ENSSSCP00115000979"/>
    <property type="gene ID" value="ENSSSCG00115000650"/>
</dbReference>
<dbReference type="Ensembl" id="ENSSSCT00130050107">
    <property type="protein sequence ID" value="ENSSSCP00130035650"/>
    <property type="gene ID" value="ENSSSCG00130025736"/>
</dbReference>
<dbReference type="GeneID" id="100513764"/>
<dbReference type="KEGG" id="ssc:100513764"/>
<dbReference type="CTD" id="7141"/>
<dbReference type="VGNC" id="VGNC:95550">
    <property type="gene designation" value="TNP1"/>
</dbReference>
<dbReference type="eggNOG" id="ENOG502TKT1">
    <property type="taxonomic scope" value="Eukaryota"/>
</dbReference>
<dbReference type="GeneTree" id="ENSGT00390000000539"/>
<dbReference type="HOGENOM" id="CLU_3019482_0_0_1"/>
<dbReference type="InParanoid" id="P17306"/>
<dbReference type="OMA" id="FKSHGMR"/>
<dbReference type="TreeFam" id="TF338391"/>
<dbReference type="Proteomes" id="UP000008227">
    <property type="component" value="Chromosome 15"/>
</dbReference>
<dbReference type="Proteomes" id="UP000314985">
    <property type="component" value="Chromosome 15"/>
</dbReference>
<dbReference type="Proteomes" id="UP000694570">
    <property type="component" value="Unplaced"/>
</dbReference>
<dbReference type="Proteomes" id="UP000694571">
    <property type="component" value="Unplaced"/>
</dbReference>
<dbReference type="Proteomes" id="UP000694720">
    <property type="component" value="Unplaced"/>
</dbReference>
<dbReference type="Proteomes" id="UP000694722">
    <property type="component" value="Unplaced"/>
</dbReference>
<dbReference type="Proteomes" id="UP000694723">
    <property type="component" value="Unplaced"/>
</dbReference>
<dbReference type="Proteomes" id="UP000694724">
    <property type="component" value="Unplaced"/>
</dbReference>
<dbReference type="Proteomes" id="UP000694725">
    <property type="component" value="Unplaced"/>
</dbReference>
<dbReference type="Proteomes" id="UP000694726">
    <property type="component" value="Unplaced"/>
</dbReference>
<dbReference type="Proteomes" id="UP000694727">
    <property type="component" value="Unplaced"/>
</dbReference>
<dbReference type="Proteomes" id="UP000694728">
    <property type="component" value="Unplaced"/>
</dbReference>
<dbReference type="Bgee" id="ENSSSCG00000016179">
    <property type="expression patterns" value="Expressed in testis and 7 other cell types or tissues"/>
</dbReference>
<dbReference type="GO" id="GO:0001673">
    <property type="term" value="C:male germ cell nucleus"/>
    <property type="evidence" value="ECO:0000318"/>
    <property type="project" value="GO_Central"/>
</dbReference>
<dbReference type="GO" id="GO:0000786">
    <property type="term" value="C:nucleosome"/>
    <property type="evidence" value="ECO:0000250"/>
    <property type="project" value="UniProtKB"/>
</dbReference>
<dbReference type="GO" id="GO:0005634">
    <property type="term" value="C:nucleus"/>
    <property type="evidence" value="ECO:0000314"/>
    <property type="project" value="MGI"/>
</dbReference>
<dbReference type="GO" id="GO:0003677">
    <property type="term" value="F:DNA binding"/>
    <property type="evidence" value="ECO:0000250"/>
    <property type="project" value="UniProtKB"/>
</dbReference>
<dbReference type="GO" id="GO:0006338">
    <property type="term" value="P:chromatin remodeling"/>
    <property type="evidence" value="ECO:0000250"/>
    <property type="project" value="UniProtKB"/>
</dbReference>
<dbReference type="GO" id="GO:0030317">
    <property type="term" value="P:flagellated sperm motility"/>
    <property type="evidence" value="ECO:0000250"/>
    <property type="project" value="UniProtKB"/>
</dbReference>
<dbReference type="GO" id="GO:0031507">
    <property type="term" value="P:heterochromatin formation"/>
    <property type="evidence" value="ECO:0000250"/>
    <property type="project" value="UniProtKB"/>
</dbReference>
<dbReference type="GO" id="GO:0045892">
    <property type="term" value="P:negative regulation of DNA-templated transcription"/>
    <property type="evidence" value="ECO:0000250"/>
    <property type="project" value="UniProtKB"/>
</dbReference>
<dbReference type="GO" id="GO:0006337">
    <property type="term" value="P:nucleosome disassembly"/>
    <property type="evidence" value="ECO:0000250"/>
    <property type="project" value="UniProtKB"/>
</dbReference>
<dbReference type="GO" id="GO:0010954">
    <property type="term" value="P:positive regulation of protein processing"/>
    <property type="evidence" value="ECO:0000250"/>
    <property type="project" value="UniProtKB"/>
</dbReference>
<dbReference type="GO" id="GO:0019953">
    <property type="term" value="P:sexual reproduction"/>
    <property type="evidence" value="ECO:0000250"/>
    <property type="project" value="UniProtKB"/>
</dbReference>
<dbReference type="GO" id="GO:0000012">
    <property type="term" value="P:single strand break repair"/>
    <property type="evidence" value="ECO:0000250"/>
    <property type="project" value="UniProtKB"/>
</dbReference>
<dbReference type="GO" id="GO:0035092">
    <property type="term" value="P:sperm DNA condensation"/>
    <property type="evidence" value="ECO:0000250"/>
    <property type="project" value="UniProtKB"/>
</dbReference>
<dbReference type="GO" id="GO:0007286">
    <property type="term" value="P:spermatid development"/>
    <property type="evidence" value="ECO:0000250"/>
    <property type="project" value="UniProtKB"/>
</dbReference>
<dbReference type="GO" id="GO:0007290">
    <property type="term" value="P:spermatid nucleus elongation"/>
    <property type="evidence" value="ECO:0000250"/>
    <property type="project" value="UniProtKB"/>
</dbReference>
<dbReference type="InterPro" id="IPR001319">
    <property type="entry name" value="Nuclear_transition_prot1"/>
</dbReference>
<dbReference type="InterPro" id="IPR020062">
    <property type="entry name" value="Nuclear_transition_prot1_CS"/>
</dbReference>
<dbReference type="PANTHER" id="PTHR17486">
    <property type="entry name" value="SPERMATID NUCLEAR TRANSITION PROTEIN 1"/>
    <property type="match status" value="1"/>
</dbReference>
<dbReference type="PANTHER" id="PTHR17486:SF0">
    <property type="entry name" value="SPERMATID NUCLEAR TRANSITION PROTEIN 1"/>
    <property type="match status" value="1"/>
</dbReference>
<dbReference type="Pfam" id="PF02079">
    <property type="entry name" value="TP1"/>
    <property type="match status" value="1"/>
</dbReference>
<dbReference type="PROSITE" id="PS00541">
    <property type="entry name" value="TP1"/>
    <property type="match status" value="1"/>
</dbReference>
<accession>P17306</accession>
<keyword id="KW-0158">Chromosome</keyword>
<keyword id="KW-0217">Developmental protein</keyword>
<keyword id="KW-0221">Differentiation</keyword>
<keyword id="KW-0903">Direct protein sequencing</keyword>
<keyword id="KW-0238">DNA-binding</keyword>
<keyword id="KW-0544">Nucleosome core</keyword>
<keyword id="KW-0539">Nucleus</keyword>
<keyword id="KW-0597">Phosphoprotein</keyword>
<keyword id="KW-1185">Reference proteome</keyword>
<keyword id="KW-0744">Spermatogenesis</keyword>
<reference key="1">
    <citation type="journal article" date="1989" name="Differentiation">
        <title>Nucleotide sequences and expression of cDNA clones for boar and bull transition protein 1 and its evolutionary conservation in mammals.</title>
        <authorList>
            <person name="Kremling H."/>
            <person name="Luerssen H."/>
            <person name="Abham I.M."/>
            <person name="Klemm U."/>
            <person name="Tsaousidou S."/>
            <person name="Engel W."/>
        </authorList>
    </citation>
    <scope>NUCLEOTIDE SEQUENCE [MRNA]</scope>
    <source>
        <tissue>Testis</tissue>
    </source>
</reference>
<reference key="2">
    <citation type="journal article" date="1992" name="Biol. Chem. Hoppe-Seyler">
        <title>Characterization of four genes encoding basic proteins of the porcine spermatid nucleus and close linkage of three of them.</title>
        <authorList>
            <person name="Keime S."/>
            <person name="Heitland K."/>
            <person name="Kumm S."/>
            <person name="Schloesser M."/>
            <person name="Hroch N."/>
            <person name="Holtz W."/>
            <person name="Engel W."/>
        </authorList>
    </citation>
    <scope>NUCLEOTIDE SEQUENCE [GENOMIC DNA]</scope>
</reference>
<reference key="3">
    <citation type="journal article" date="1994" name="Biochem. Mol. Biol. Int.">
        <title>The amino acid sequence and phosphorylation sites of a boar transition protein 1.</title>
        <authorList>
            <person name="Akama K."/>
            <person name="Kojima S."/>
            <person name="Nakano M."/>
            <person name="Tobita T."/>
            <person name="Hayashi H."/>
        </authorList>
    </citation>
    <scope>PROTEIN SEQUENCE OF 2-55</scope>
</reference>
<proteinExistence type="evidence at protein level"/>
<feature type="initiator methionine" description="Removed" evidence="4">
    <location>
        <position position="1"/>
    </location>
</feature>
<feature type="chain" id="PRO_0000191419" description="Spermatid nuclear transition protein 1">
    <location>
        <begin position="2"/>
        <end position="55"/>
    </location>
</feature>
<feature type="region of interest" description="Disordered" evidence="3">
    <location>
        <begin position="1"/>
        <end position="55"/>
    </location>
</feature>
<feature type="compositionally biased region" description="Basic residues" evidence="3">
    <location>
        <begin position="1"/>
        <end position="42"/>
    </location>
</feature>
<feature type="modified residue" description="Phosphoserine" evidence="2">
    <location>
        <position position="9"/>
    </location>
</feature>
<feature type="modified residue" description="Phosphoserine" evidence="2">
    <location>
        <position position="37"/>
    </location>
</feature>
<feature type="modified residue" description="Phosphoserine" evidence="2">
    <location>
        <position position="40"/>
    </location>
</feature>
<sequence length="55" mass="6424">MSTSRKLKSHGMRRGKNRAPHKGVKRGGSKRKYRKGSLKSRKRCDDANRNYRSHL</sequence>